<feature type="chain" id="PRO_0000461687" description="Ribosome biogenesis regulatory protein homolog">
    <location>
        <begin position="1"/>
        <end position="202"/>
    </location>
</feature>
<feature type="region of interest" description="Disordered" evidence="2">
    <location>
        <begin position="82"/>
        <end position="103"/>
    </location>
</feature>
<feature type="strand" evidence="17">
    <location>
        <begin position="22"/>
        <end position="24"/>
    </location>
</feature>
<feature type="turn" evidence="17">
    <location>
        <begin position="25"/>
        <end position="28"/>
    </location>
</feature>
<feature type="strand" evidence="17">
    <location>
        <begin position="29"/>
        <end position="32"/>
    </location>
</feature>
<feature type="helix" evidence="17">
    <location>
        <begin position="44"/>
        <end position="68"/>
    </location>
</feature>
<feature type="strand" evidence="17">
    <location>
        <begin position="80"/>
        <end position="82"/>
    </location>
</feature>
<gene>
    <name evidence="6" type="ORF">HT_0057260</name>
</gene>
<sequence>MSTDTSKPARLPVTVEKPTPYTFDLGLLLANDPNPVNVPKTTDTQVLEQHLASVARDGAQVLINQLLTTTTITATKDGVLLTLPPPTTPLPREKPVPQPKPETKWQAFARRRGIKPKTREQRRNLQYNPTTGQWERKWGYKGANKRGETDPIIEVSAAKEAMRPEGTSVRGDKRREIRARVKKNQKQMLRNQRIAAEKMGKK</sequence>
<comment type="function">
    <text evidence="3">Involved in ribosomal large subunit assembly.</text>
</comment>
<comment type="subunit">
    <text evidence="3">Component of a hexameric 5S RNP precursor complex, composed of 5S RNA, RRS1, RPF2, RPL5, RPL11 and SYO1; this complex acts as a precursor for ribosome assembly.</text>
</comment>
<comment type="subcellular location">
    <subcellularLocation>
        <location evidence="1">Nucleus</location>
    </subcellularLocation>
</comment>
<comment type="similarity">
    <text evidence="4">Belongs to the RRS1 family.</text>
</comment>
<accession>G0SCH6</accession>
<reference key="1">
    <citation type="journal article" date="2011" name="Cell">
        <title>Insight into structure and assembly of the nuclear pore complex by utilizing the genome of a eukaryotic thermophile.</title>
        <authorList>
            <person name="Amlacher S."/>
            <person name="Sarges P."/>
            <person name="Flemming D."/>
            <person name="van Noort V."/>
            <person name="Kunze R."/>
            <person name="Devos D.P."/>
            <person name="Arumugam M."/>
            <person name="Bork P."/>
            <person name="Hurt E."/>
        </authorList>
    </citation>
    <scope>NUCLEOTIDE SEQUENCE [LARGE SCALE GENOMIC DNA]</scope>
    <source>
        <strain>DSM 1495 / CBS 144.50 / IMI 039719</strain>
    </source>
</reference>
<reference evidence="8" key="2">
    <citation type="journal article" date="2023" name="EMBO Rep.">
        <title>Mechanism of 5S RNP recruitment and helicase-surveilled rRNA maturation during pre-60S biogenesis.</title>
        <authorList>
            <person name="Lau B."/>
            <person name="Huang Z."/>
            <person name="Kellner N."/>
            <person name="Niu S."/>
            <person name="Berninghausen O."/>
            <person name="Beckmann R."/>
            <person name="Hurt E."/>
            <person name="Cheng J."/>
        </authorList>
    </citation>
    <scope>STRUCTURE BY ELECTRON MICROSCOPY (3.10 ANGSTROMS)</scope>
</reference>
<reference evidence="9 10 11 12 13 14 15 16" key="3">
    <citation type="journal article" date="2023" name="EMBO Rep.">
        <title>Structural insights into coordinating 5S RNP rotation with ITS2 pre-RNA processing during ribosome formation.</title>
        <authorList>
            <person name="Thoms M."/>
            <person name="Lau B."/>
            <person name="Cheng J."/>
            <person name="Fromm L."/>
            <person name="Denk T."/>
            <person name="Kellner N."/>
            <person name="Flemming D."/>
            <person name="Fischer P."/>
            <person name="Falquet L."/>
            <person name="Berninghausen O."/>
            <person name="Beckmann R."/>
            <person name="Hurt E."/>
        </authorList>
    </citation>
    <scope>STRUCTURE BY ELECTRON MICROSCOPY (2.12 ANGSTROMS)</scope>
</reference>
<reference evidence="7" key="4">
    <citation type="journal article" date="2023" name="Nat. Struct. Mol. Biol.">
        <title>Structure of nascent 5S RNPs at the crossroad between ribosome assembly and MDM2-p53 pathways.</title>
        <authorList>
            <person name="Castillo Duque de Estrada N.M."/>
            <person name="Thoms M."/>
            <person name="Flemming D."/>
            <person name="Hammaren H.M."/>
            <person name="Buschauer R."/>
            <person name="Ameismeier M."/>
            <person name="Bassler J."/>
            <person name="Beck M."/>
            <person name="Beckmann R."/>
            <person name="Hurt E."/>
        </authorList>
    </citation>
    <scope>STRUCTURE BY ELECTRON MICROSCOPY (3.50 ANGSTROMS) IN COMPLEX WITH RPL11; RPL5; RPF2; SYO1 AND 5S RNA</scope>
    <scope>FUNCTION</scope>
    <scope>SUBUNIT</scope>
</reference>
<keyword id="KW-0002">3D-structure</keyword>
<keyword id="KW-0539">Nucleus</keyword>
<keyword id="KW-1185">Reference proteome</keyword>
<keyword id="KW-0690">Ribosome biogenesis</keyword>
<dbReference type="EMBL" id="GL988045">
    <property type="protein sequence ID" value="EGS19102.1"/>
    <property type="molecule type" value="Genomic_DNA"/>
</dbReference>
<dbReference type="RefSeq" id="XP_006696047.1">
    <property type="nucleotide sequence ID" value="XM_006695984.1"/>
</dbReference>
<dbReference type="PDB" id="7OZS">
    <property type="method" value="EM"/>
    <property type="resolution" value="3.50 A"/>
    <property type="chains" value="D=1-202"/>
</dbReference>
<dbReference type="PDB" id="8I9R">
    <property type="method" value="EM"/>
    <property type="resolution" value="3.10 A"/>
    <property type="chains" value="Cx=1-202"/>
</dbReference>
<dbReference type="PDB" id="8PV1">
    <property type="method" value="EM"/>
    <property type="resolution" value="2.56 A"/>
    <property type="chains" value="Cg=1-202"/>
</dbReference>
<dbReference type="PDB" id="8PV2">
    <property type="method" value="EM"/>
    <property type="resolution" value="2.63 A"/>
    <property type="chains" value="Cg=1-202"/>
</dbReference>
<dbReference type="PDB" id="8PV3">
    <property type="method" value="EM"/>
    <property type="resolution" value="2.80 A"/>
    <property type="chains" value="Cg=1-202"/>
</dbReference>
<dbReference type="PDB" id="8PV4">
    <property type="method" value="EM"/>
    <property type="resolution" value="2.90 A"/>
    <property type="chains" value="Cg=1-202"/>
</dbReference>
<dbReference type="PDB" id="8PV5">
    <property type="method" value="EM"/>
    <property type="resolution" value="2.86 A"/>
    <property type="chains" value="Cg=1-202"/>
</dbReference>
<dbReference type="PDB" id="8PV7">
    <property type="method" value="EM"/>
    <property type="resolution" value="2.12 A"/>
    <property type="chains" value="Cg=1-202"/>
</dbReference>
<dbReference type="PDB" id="8PVK">
    <property type="method" value="EM"/>
    <property type="resolution" value="2.55 A"/>
    <property type="chains" value="Cg=1-202"/>
</dbReference>
<dbReference type="PDB" id="8PVL">
    <property type="method" value="EM"/>
    <property type="resolution" value="2.19 A"/>
    <property type="chains" value="Cg=1-202"/>
</dbReference>
<dbReference type="PDBsum" id="7OZS"/>
<dbReference type="PDBsum" id="8I9R"/>
<dbReference type="PDBsum" id="8PV1"/>
<dbReference type="PDBsum" id="8PV2"/>
<dbReference type="PDBsum" id="8PV3"/>
<dbReference type="PDBsum" id="8PV4"/>
<dbReference type="PDBsum" id="8PV5"/>
<dbReference type="PDBsum" id="8PV7"/>
<dbReference type="PDBsum" id="8PVK"/>
<dbReference type="PDBsum" id="8PVL"/>
<dbReference type="EMDB" id="EMD-13134"/>
<dbReference type="EMDB" id="EMD-17950"/>
<dbReference type="EMDB" id="EMD-17951"/>
<dbReference type="EMDB" id="EMD-17952"/>
<dbReference type="EMDB" id="EMD-17953"/>
<dbReference type="EMDB" id="EMD-17954"/>
<dbReference type="EMDB" id="EMD-17956"/>
<dbReference type="EMDB" id="EMD-17969"/>
<dbReference type="EMDB" id="EMD-17970"/>
<dbReference type="EMDB" id="EMD-35281"/>
<dbReference type="SMR" id="G0SCH6"/>
<dbReference type="STRING" id="759272.G0SCH6"/>
<dbReference type="KEGG" id="cthr:CTHT_0057260"/>
<dbReference type="eggNOG" id="KOG1765">
    <property type="taxonomic scope" value="Eukaryota"/>
</dbReference>
<dbReference type="HOGENOM" id="CLU_065163_2_0_1"/>
<dbReference type="OMA" id="KMVYDEA"/>
<dbReference type="OrthoDB" id="28455at2759"/>
<dbReference type="Proteomes" id="UP000008066">
    <property type="component" value="Unassembled WGS sequence"/>
</dbReference>
<dbReference type="GO" id="GO:0005634">
    <property type="term" value="C:nucleus"/>
    <property type="evidence" value="ECO:0007669"/>
    <property type="project" value="UniProtKB-SubCell"/>
</dbReference>
<dbReference type="GO" id="GO:0042254">
    <property type="term" value="P:ribosome biogenesis"/>
    <property type="evidence" value="ECO:0007669"/>
    <property type="project" value="UniProtKB-KW"/>
</dbReference>
<dbReference type="InterPro" id="IPR007023">
    <property type="entry name" value="Ribosom_reg"/>
</dbReference>
<dbReference type="Pfam" id="PF04939">
    <property type="entry name" value="RRS1"/>
    <property type="match status" value="1"/>
</dbReference>
<proteinExistence type="evidence at protein level"/>
<evidence type="ECO:0000255" key="1">
    <source>
        <dbReference type="RuleBase" id="RU364132"/>
    </source>
</evidence>
<evidence type="ECO:0000256" key="2">
    <source>
        <dbReference type="SAM" id="MobiDB-lite"/>
    </source>
</evidence>
<evidence type="ECO:0000269" key="3">
    <source>
    </source>
</evidence>
<evidence type="ECO:0000305" key="4"/>
<evidence type="ECO:0000305" key="5">
    <source>
    </source>
</evidence>
<evidence type="ECO:0000312" key="6">
    <source>
        <dbReference type="EMBL" id="EGS19102.1"/>
    </source>
</evidence>
<evidence type="ECO:0007744" key="7">
    <source>
        <dbReference type="PDB" id="7OZS"/>
    </source>
</evidence>
<evidence type="ECO:0007744" key="8">
    <source>
        <dbReference type="PDB" id="8I9R"/>
    </source>
</evidence>
<evidence type="ECO:0007744" key="9">
    <source>
        <dbReference type="PDB" id="8PV1"/>
    </source>
</evidence>
<evidence type="ECO:0007744" key="10">
    <source>
        <dbReference type="PDB" id="8PV2"/>
    </source>
</evidence>
<evidence type="ECO:0007744" key="11">
    <source>
        <dbReference type="PDB" id="8PV3"/>
    </source>
</evidence>
<evidence type="ECO:0007744" key="12">
    <source>
        <dbReference type="PDB" id="8PV4"/>
    </source>
</evidence>
<evidence type="ECO:0007744" key="13">
    <source>
        <dbReference type="PDB" id="8PV5"/>
    </source>
</evidence>
<evidence type="ECO:0007744" key="14">
    <source>
        <dbReference type="PDB" id="8PV7"/>
    </source>
</evidence>
<evidence type="ECO:0007744" key="15">
    <source>
        <dbReference type="PDB" id="8PVK"/>
    </source>
</evidence>
<evidence type="ECO:0007744" key="16">
    <source>
        <dbReference type="PDB" id="8PVL"/>
    </source>
</evidence>
<evidence type="ECO:0007829" key="17">
    <source>
        <dbReference type="PDB" id="7OZS"/>
    </source>
</evidence>
<name>RRS1_CHATD</name>
<organism>
    <name type="scientific">Chaetomium thermophilum (strain DSM 1495 / CBS 144.50 / IMI 039719)</name>
    <name type="common">Thermochaetoides thermophila</name>
    <dbReference type="NCBI Taxonomy" id="759272"/>
    <lineage>
        <taxon>Eukaryota</taxon>
        <taxon>Fungi</taxon>
        <taxon>Dikarya</taxon>
        <taxon>Ascomycota</taxon>
        <taxon>Pezizomycotina</taxon>
        <taxon>Sordariomycetes</taxon>
        <taxon>Sordariomycetidae</taxon>
        <taxon>Sordariales</taxon>
        <taxon>Chaetomiaceae</taxon>
        <taxon>Thermochaetoides</taxon>
    </lineage>
</organism>
<protein>
    <recommendedName>
        <fullName evidence="5">Ribosome biogenesis regulatory protein homolog</fullName>
        <shortName evidence="5">ctRRS1</shortName>
    </recommendedName>
</protein>